<comment type="function">
    <text evidence="1">Oxidoreductase that binds mammalian estrogens with high affinity.</text>
</comment>
<comment type="catalytic activity">
    <reaction evidence="1">
        <text>A + NADPH + H(+) = AH2 + NADP(+)</text>
        <dbReference type="Rhea" id="RHEA:13149"/>
        <dbReference type="ChEBI" id="CHEBI:13193"/>
        <dbReference type="ChEBI" id="CHEBI:15378"/>
        <dbReference type="ChEBI" id="CHEBI:17499"/>
        <dbReference type="ChEBI" id="CHEBI:57783"/>
        <dbReference type="ChEBI" id="CHEBI:58349"/>
        <dbReference type="EC" id="1.6.99.1"/>
    </reaction>
</comment>
<comment type="cofactor">
    <cofactor evidence="2">
        <name>FMN</name>
        <dbReference type="ChEBI" id="CHEBI:58210"/>
    </cofactor>
</comment>
<comment type="induction">
    <text evidence="3">Induced by estrogen (17beta-estradiol).</text>
</comment>
<comment type="disruption phenotype">
    <text evidence="3">Decreases phagocytosis of the fungus by host cells (PubMed:34986357). Increases expression of GPD2 (PubMed:34986357).</text>
</comment>
<comment type="similarity">
    <text evidence="4">Belongs to the NADH:flavin oxidoreductase/NADH oxidase family.</text>
</comment>
<evidence type="ECO:0000250" key="1">
    <source>
        <dbReference type="UniProtKB" id="P43084"/>
    </source>
</evidence>
<evidence type="ECO:0000250" key="2">
    <source>
        <dbReference type="UniProtKB" id="Q02899"/>
    </source>
</evidence>
<evidence type="ECO:0000269" key="3">
    <source>
    </source>
</evidence>
<evidence type="ECO:0000305" key="4"/>
<evidence type="ECO:0000312" key="5">
    <source>
        <dbReference type="CGD" id="CAL0000199513"/>
    </source>
</evidence>
<evidence type="ECO:0000312" key="6">
    <source>
        <dbReference type="EMBL" id="AOW30064.1"/>
    </source>
</evidence>
<evidence type="ECO:0000312" key="7">
    <source>
        <dbReference type="Proteomes" id="UP000000559"/>
    </source>
</evidence>
<sequence length="407" mass="46089">MTIESTNSFVVPSDTELIDVTPLGSTKLFQPIKVGNNVLPQRIAYVPTTRFRASKDHIPSDLQLNYYNARSQYPGTLIITEATFASERGGIDLHVPGIYNDAQAKSWKKINEAIHGNGSFSSVQLWYLGRVANAKDLKDSGLPLIAPSAVYWDENSEKLAKEAGNELRALTEEEIDHIVEVEYPNAAKHALEAGFDYVEIHGAHGYLLDQFLNLASNKRTDKYGCGSIENRARLLLRVVDKLIEVVGANRLALRLSPWASFQGMEIEGEEIHSYILQQLQQRADNGQQLAYISLVEPRVTGIYDVSLKDQQGRSNEFAYKIWKGNFIRAGNYTYDAPEFKTLINDLKNDRTIIGFSRFFTSNPDLVEKLKLGKPLNYYNREEFYKYYNYGYNSYDESEKQVIGKPLA</sequence>
<protein>
    <recommendedName>
        <fullName evidence="1">Probable NADPH dehydrogenase</fullName>
        <ecNumber evidence="1">1.6.99.1</ecNumber>
    </recommendedName>
    <alternativeName>
        <fullName evidence="1">Estrogen-binding protein</fullName>
        <shortName evidence="1">EBP</shortName>
    </alternativeName>
</protein>
<feature type="chain" id="PRO_0000456036" description="Probable NADPH dehydrogenase">
    <location>
        <begin position="1"/>
        <end position="407"/>
    </location>
</feature>
<feature type="active site" description="Proton donor" evidence="2">
    <location>
        <position position="206"/>
    </location>
</feature>
<feature type="binding site" evidence="2">
    <location>
        <position position="49"/>
    </location>
    <ligand>
        <name>FMN</name>
        <dbReference type="ChEBI" id="CHEBI:58210"/>
    </ligand>
</feature>
<feature type="binding site" evidence="2">
    <location>
        <position position="124"/>
    </location>
    <ligand>
        <name>FMN</name>
        <dbReference type="ChEBI" id="CHEBI:58210"/>
    </ligand>
</feature>
<feature type="binding site" evidence="2">
    <location>
        <position position="254"/>
    </location>
    <ligand>
        <name>FMN</name>
        <dbReference type="ChEBI" id="CHEBI:58210"/>
    </ligand>
</feature>
<feature type="binding site" evidence="2">
    <location>
        <position position="357"/>
    </location>
    <ligand>
        <name>FMN</name>
        <dbReference type="ChEBI" id="CHEBI:58210"/>
    </ligand>
</feature>
<accession>A0A1D8PPK1</accession>
<proteinExistence type="evidence at transcript level"/>
<gene>
    <name evidence="5" type="primary">EBP1</name>
    <name evidence="5" type="ordered locus">orf19.125</name>
    <name evidence="6" type="ORF">CAALFM_C601180CA</name>
</gene>
<reference evidence="7" key="1">
    <citation type="journal article" date="2004" name="Proc. Natl. Acad. Sci. U.S.A.">
        <title>The diploid genome sequence of Candida albicans.</title>
        <authorList>
            <person name="Jones T."/>
            <person name="Federspiel N.A."/>
            <person name="Chibana H."/>
            <person name="Dungan J."/>
            <person name="Kalman S."/>
            <person name="Magee B.B."/>
            <person name="Newport G."/>
            <person name="Thorstenson Y.R."/>
            <person name="Agabian N."/>
            <person name="Magee P.T."/>
            <person name="Davis R.W."/>
            <person name="Scherer S."/>
        </authorList>
    </citation>
    <scope>NUCLEOTIDE SEQUENCE [LARGE SCALE GENOMIC DNA]</scope>
    <source>
        <strain evidence="7">SC5314 / ATCC MYA-2876</strain>
    </source>
</reference>
<reference evidence="7" key="2">
    <citation type="journal article" date="2007" name="Genome Biol.">
        <title>Assembly of the Candida albicans genome into sixteen supercontigs aligned on the eight chromosomes.</title>
        <authorList>
            <person name="van het Hoog M."/>
            <person name="Rast T.J."/>
            <person name="Martchenko M."/>
            <person name="Grindle S."/>
            <person name="Dignard D."/>
            <person name="Hogues H."/>
            <person name="Cuomo C."/>
            <person name="Berriman M."/>
            <person name="Scherer S."/>
            <person name="Magee B.B."/>
            <person name="Whiteway M."/>
            <person name="Chibana H."/>
            <person name="Nantel A."/>
            <person name="Magee P.T."/>
        </authorList>
    </citation>
    <scope>GENOME REANNOTATION</scope>
    <source>
        <strain evidence="7">SC5314 / ATCC MYA-2876</strain>
    </source>
</reference>
<reference evidence="7" key="3">
    <citation type="journal article" date="2013" name="Genome Biol.">
        <title>Assembly of a phased diploid Candida albicans genome facilitates allele-specific measurements and provides a simple model for repeat and indel structure.</title>
        <authorList>
            <person name="Muzzey D."/>
            <person name="Schwartz K."/>
            <person name="Weissman J.S."/>
            <person name="Sherlock G."/>
        </authorList>
    </citation>
    <scope>NUCLEOTIDE SEQUENCE [LARGE SCALE GENOMIC DNA]</scope>
    <scope>GENOME REANNOTATION</scope>
    <source>
        <strain>SC5314 / ATCC MYA-2876</strain>
    </source>
</reference>
<reference evidence="4" key="4">
    <citation type="journal article" date="2022" name="Cell Rep.">
        <title>Estrogen promotes innate immune evasion of Candida albicans through inactivation of the alternative complement system.</title>
        <authorList>
            <person name="Kumwenda P."/>
            <person name="Cottier F."/>
            <person name="Hendry A.C."/>
            <person name="Kneafsey D."/>
            <person name="Keevan B."/>
            <person name="Gallagher H."/>
            <person name="Tsai H.J."/>
            <person name="Hall R.A."/>
        </authorList>
    </citation>
    <scope>INDUCTION</scope>
    <scope>DISRUPTION PHENOTYPE</scope>
</reference>
<dbReference type="EC" id="1.6.99.1" evidence="1"/>
<dbReference type="EMBL" id="CP017628">
    <property type="protein sequence ID" value="AOW30064.1"/>
    <property type="molecule type" value="Genomic_DNA"/>
</dbReference>
<dbReference type="RefSeq" id="XP_714331.2">
    <property type="nucleotide sequence ID" value="XM_709238.2"/>
</dbReference>
<dbReference type="SMR" id="A0A1D8PPK1"/>
<dbReference type="FunCoup" id="A0A1D8PPK1">
    <property type="interactions" value="879"/>
</dbReference>
<dbReference type="STRING" id="237561.A0A1D8PPK1"/>
<dbReference type="EnsemblFungi" id="C6_01180C_A-T">
    <property type="protein sequence ID" value="C6_01180C_A-T-p1"/>
    <property type="gene ID" value="C6_01180C_A"/>
</dbReference>
<dbReference type="GeneID" id="3644060"/>
<dbReference type="KEGG" id="cal:CAALFM_C601180CA"/>
<dbReference type="CGD" id="CAL0000199513">
    <property type="gene designation" value="EBP1"/>
</dbReference>
<dbReference type="VEuPathDB" id="FungiDB:C6_01180C_A"/>
<dbReference type="InParanoid" id="A0A1D8PPK1"/>
<dbReference type="OrthoDB" id="276546at2759"/>
<dbReference type="Proteomes" id="UP000000559">
    <property type="component" value="Chromosome 6"/>
</dbReference>
<dbReference type="GO" id="GO:0009986">
    <property type="term" value="C:cell surface"/>
    <property type="evidence" value="ECO:0000314"/>
    <property type="project" value="CGD"/>
</dbReference>
<dbReference type="GO" id="GO:0000324">
    <property type="term" value="C:fungal-type vacuole"/>
    <property type="evidence" value="ECO:0000314"/>
    <property type="project" value="CGD"/>
</dbReference>
<dbReference type="GO" id="GO:0030446">
    <property type="term" value="C:hyphal cell wall"/>
    <property type="evidence" value="ECO:0000314"/>
    <property type="project" value="CGD"/>
</dbReference>
<dbReference type="GO" id="GO:0099130">
    <property type="term" value="F:estrogen binding"/>
    <property type="evidence" value="ECO:0000250"/>
    <property type="project" value="UniProtKB"/>
</dbReference>
<dbReference type="GO" id="GO:0010181">
    <property type="term" value="F:FMN binding"/>
    <property type="evidence" value="ECO:0007669"/>
    <property type="project" value="InterPro"/>
</dbReference>
<dbReference type="GO" id="GO:0042562">
    <property type="term" value="F:hormone binding"/>
    <property type="evidence" value="ECO:0000314"/>
    <property type="project" value="CGD"/>
</dbReference>
<dbReference type="GO" id="GO:0003959">
    <property type="term" value="F:NADPH dehydrogenase activity"/>
    <property type="evidence" value="ECO:0000314"/>
    <property type="project" value="CGD"/>
</dbReference>
<dbReference type="GO" id="GO:0005496">
    <property type="term" value="F:steroid binding"/>
    <property type="evidence" value="ECO:0000314"/>
    <property type="project" value="CGD"/>
</dbReference>
<dbReference type="GO" id="GO:0008202">
    <property type="term" value="P:steroid metabolic process"/>
    <property type="evidence" value="ECO:0000314"/>
    <property type="project" value="CGD"/>
</dbReference>
<dbReference type="CDD" id="cd02933">
    <property type="entry name" value="OYE_like_FMN"/>
    <property type="match status" value="1"/>
</dbReference>
<dbReference type="FunFam" id="3.20.20.70:FF:000138">
    <property type="entry name" value="NADPH dehydrogenase 1"/>
    <property type="match status" value="1"/>
</dbReference>
<dbReference type="Gene3D" id="3.20.20.70">
    <property type="entry name" value="Aldolase class I"/>
    <property type="match status" value="1"/>
</dbReference>
<dbReference type="InterPro" id="IPR013785">
    <property type="entry name" value="Aldolase_TIM"/>
</dbReference>
<dbReference type="InterPro" id="IPR001155">
    <property type="entry name" value="OxRdtase_FMN_N"/>
</dbReference>
<dbReference type="InterPro" id="IPR045247">
    <property type="entry name" value="Oye-like"/>
</dbReference>
<dbReference type="PANTHER" id="PTHR22893">
    <property type="entry name" value="NADH OXIDOREDUCTASE-RELATED"/>
    <property type="match status" value="1"/>
</dbReference>
<dbReference type="PANTHER" id="PTHR22893:SF91">
    <property type="entry name" value="NADPH DEHYDROGENASE 2-RELATED"/>
    <property type="match status" value="1"/>
</dbReference>
<dbReference type="Pfam" id="PF00724">
    <property type="entry name" value="Oxidored_FMN"/>
    <property type="match status" value="1"/>
</dbReference>
<dbReference type="SUPFAM" id="SSF51395">
    <property type="entry name" value="FMN-linked oxidoreductases"/>
    <property type="match status" value="1"/>
</dbReference>
<name>EBP1_CANAL</name>
<organism evidence="7">
    <name type="scientific">Candida albicans (strain SC5314 / ATCC MYA-2876)</name>
    <name type="common">Yeast</name>
    <dbReference type="NCBI Taxonomy" id="237561"/>
    <lineage>
        <taxon>Eukaryota</taxon>
        <taxon>Fungi</taxon>
        <taxon>Dikarya</taxon>
        <taxon>Ascomycota</taxon>
        <taxon>Saccharomycotina</taxon>
        <taxon>Pichiomycetes</taxon>
        <taxon>Debaryomycetaceae</taxon>
        <taxon>Candida/Lodderomyces clade</taxon>
        <taxon>Candida</taxon>
    </lineage>
</organism>
<keyword id="KW-0285">Flavoprotein</keyword>
<keyword id="KW-0288">FMN</keyword>
<keyword id="KW-0521">NADP</keyword>
<keyword id="KW-0560">Oxidoreductase</keyword>
<keyword id="KW-1185">Reference proteome</keyword>